<name>RR19_HUPLU</name>
<reference key="1">
    <citation type="journal article" date="2005" name="Gene">
        <title>The first complete chloroplast genome sequence of a lycophyte, Huperzia lucidula (Lycopodiaceae).</title>
        <authorList>
            <person name="Wolf P.G."/>
            <person name="Karol K.G."/>
            <person name="Mandoli D.F."/>
            <person name="Kuehl J.V."/>
            <person name="Arumuganathan K."/>
            <person name="Ellis M.W."/>
            <person name="Mishler B.D."/>
            <person name="Kelch D.G."/>
            <person name="Olmstead R.G."/>
            <person name="Boore J.L."/>
        </authorList>
    </citation>
    <scope>NUCLEOTIDE SEQUENCE [LARGE SCALE GENOMIC DNA]</scope>
</reference>
<proteinExistence type="inferred from homology"/>
<keyword id="KW-0150">Chloroplast</keyword>
<keyword id="KW-0934">Plastid</keyword>
<keyword id="KW-0687">Ribonucleoprotein</keyword>
<keyword id="KW-0689">Ribosomal protein</keyword>
<keyword id="KW-0694">RNA-binding</keyword>
<keyword id="KW-0699">rRNA-binding</keyword>
<gene>
    <name evidence="1" type="primary">rps19</name>
</gene>
<accession>Q5SD12</accession>
<evidence type="ECO:0000255" key="1">
    <source>
        <dbReference type="HAMAP-Rule" id="MF_00531"/>
    </source>
</evidence>
<evidence type="ECO:0000305" key="2"/>
<organism>
    <name type="scientific">Huperzia lucidula</name>
    <name type="common">Shining clubmoss</name>
    <name type="synonym">Lycopodium lucidulum</name>
    <dbReference type="NCBI Taxonomy" id="37429"/>
    <lineage>
        <taxon>Eukaryota</taxon>
        <taxon>Viridiplantae</taxon>
        <taxon>Streptophyta</taxon>
        <taxon>Embryophyta</taxon>
        <taxon>Tracheophyta</taxon>
        <taxon>Lycopodiopsida</taxon>
        <taxon>Lycopodiales</taxon>
        <taxon>Lycopodiaceae</taxon>
        <taxon>Huperzioideae</taxon>
        <taxon>Huperzia</taxon>
    </lineage>
</organism>
<feature type="chain" id="PRO_0000129966" description="Small ribosomal subunit protein uS19c">
    <location>
        <begin position="1"/>
        <end position="92"/>
    </location>
</feature>
<comment type="function">
    <text evidence="1">Protein S19 forms a complex with S13 that binds strongly to the 16S ribosomal RNA.</text>
</comment>
<comment type="subcellular location">
    <subcellularLocation>
        <location>Plastid</location>
        <location>Chloroplast</location>
    </subcellularLocation>
</comment>
<comment type="similarity">
    <text evidence="1">Belongs to the universal ribosomal protein uS19 family.</text>
</comment>
<sequence>MARSLEKGPFVAYHLLKKIENLNVEEEKKIIVTWSRASTIVPIMVGHTIAVHNGQEHLPIYVTDRMVGHKLGEFAPTRIFRGHAKNDKKSRR</sequence>
<protein>
    <recommendedName>
        <fullName evidence="1">Small ribosomal subunit protein uS19c</fullName>
    </recommendedName>
    <alternativeName>
        <fullName evidence="2">30S ribosomal protein S19, chloroplastic</fullName>
    </alternativeName>
</protein>
<geneLocation type="chloroplast"/>
<dbReference type="EMBL" id="AY660566">
    <property type="protein sequence ID" value="AAT80684.1"/>
    <property type="molecule type" value="Genomic_DNA"/>
</dbReference>
<dbReference type="RefSeq" id="YP_209488.1">
    <property type="nucleotide sequence ID" value="NC_006861.1"/>
</dbReference>
<dbReference type="SMR" id="Q5SD12"/>
<dbReference type="GeneID" id="3283725"/>
<dbReference type="GO" id="GO:0009507">
    <property type="term" value="C:chloroplast"/>
    <property type="evidence" value="ECO:0007669"/>
    <property type="project" value="UniProtKB-SubCell"/>
</dbReference>
<dbReference type="GO" id="GO:0005763">
    <property type="term" value="C:mitochondrial small ribosomal subunit"/>
    <property type="evidence" value="ECO:0007669"/>
    <property type="project" value="TreeGrafter"/>
</dbReference>
<dbReference type="GO" id="GO:0019843">
    <property type="term" value="F:rRNA binding"/>
    <property type="evidence" value="ECO:0007669"/>
    <property type="project" value="UniProtKB-UniRule"/>
</dbReference>
<dbReference type="GO" id="GO:0003735">
    <property type="term" value="F:structural constituent of ribosome"/>
    <property type="evidence" value="ECO:0007669"/>
    <property type="project" value="InterPro"/>
</dbReference>
<dbReference type="GO" id="GO:0000028">
    <property type="term" value="P:ribosomal small subunit assembly"/>
    <property type="evidence" value="ECO:0007669"/>
    <property type="project" value="TreeGrafter"/>
</dbReference>
<dbReference type="GO" id="GO:0006412">
    <property type="term" value="P:translation"/>
    <property type="evidence" value="ECO:0007669"/>
    <property type="project" value="UniProtKB-UniRule"/>
</dbReference>
<dbReference type="FunFam" id="3.30.860.10:FF:000001">
    <property type="entry name" value="30S ribosomal protein S19"/>
    <property type="match status" value="1"/>
</dbReference>
<dbReference type="Gene3D" id="3.30.860.10">
    <property type="entry name" value="30s Ribosomal Protein S19, Chain A"/>
    <property type="match status" value="1"/>
</dbReference>
<dbReference type="HAMAP" id="MF_00531">
    <property type="entry name" value="Ribosomal_uS19"/>
    <property type="match status" value="1"/>
</dbReference>
<dbReference type="InterPro" id="IPR002222">
    <property type="entry name" value="Ribosomal_uS19"/>
</dbReference>
<dbReference type="InterPro" id="IPR005732">
    <property type="entry name" value="Ribosomal_uS19_bac-type"/>
</dbReference>
<dbReference type="InterPro" id="IPR020934">
    <property type="entry name" value="Ribosomal_uS19_CS"/>
</dbReference>
<dbReference type="InterPro" id="IPR023575">
    <property type="entry name" value="Ribosomal_uS19_SF"/>
</dbReference>
<dbReference type="NCBIfam" id="TIGR01050">
    <property type="entry name" value="rpsS_bact"/>
    <property type="match status" value="1"/>
</dbReference>
<dbReference type="PANTHER" id="PTHR11880">
    <property type="entry name" value="RIBOSOMAL PROTEIN S19P FAMILY MEMBER"/>
    <property type="match status" value="1"/>
</dbReference>
<dbReference type="PANTHER" id="PTHR11880:SF8">
    <property type="entry name" value="SMALL RIBOSOMAL SUBUNIT PROTEIN US19M"/>
    <property type="match status" value="1"/>
</dbReference>
<dbReference type="Pfam" id="PF00203">
    <property type="entry name" value="Ribosomal_S19"/>
    <property type="match status" value="1"/>
</dbReference>
<dbReference type="PIRSF" id="PIRSF002144">
    <property type="entry name" value="Ribosomal_S19"/>
    <property type="match status" value="1"/>
</dbReference>
<dbReference type="PRINTS" id="PR00975">
    <property type="entry name" value="RIBOSOMALS19"/>
</dbReference>
<dbReference type="SUPFAM" id="SSF54570">
    <property type="entry name" value="Ribosomal protein S19"/>
    <property type="match status" value="1"/>
</dbReference>
<dbReference type="PROSITE" id="PS00323">
    <property type="entry name" value="RIBOSOMAL_S19"/>
    <property type="match status" value="1"/>
</dbReference>